<sequence>MAGHSKWANIKHKKAAADAKRGKIWTRLIKEIQVAARLGGGDANSNPRLRLAVDKAADANMPKDNVKRAIDRGVGGADGANYEEIRYEGYGISGAAIIVDTLTDNRTRTVAEVRHAFSKFGGNMGTDGSVAFMFDHVGQFLFAPGTSEDALMEAALEAGADDVSTNDDGSIEVLCDWQAFSAVKDALEAAGFKAELAEVTMKPQNEVEFTGDDAAKMQKLLDALENLDDVQEVYTNAVIVEE</sequence>
<accession>B1YU49</accession>
<name>Y2210_BURA4</name>
<proteinExistence type="inferred from homology"/>
<feature type="chain" id="PRO_1000132162" description="Probable transcriptional regulatory protein BamMC406_2210">
    <location>
        <begin position="1"/>
        <end position="242"/>
    </location>
</feature>
<evidence type="ECO:0000255" key="1">
    <source>
        <dbReference type="HAMAP-Rule" id="MF_00693"/>
    </source>
</evidence>
<comment type="subcellular location">
    <subcellularLocation>
        <location evidence="1">Cytoplasm</location>
    </subcellularLocation>
</comment>
<comment type="similarity">
    <text evidence="1">Belongs to the TACO1 family.</text>
</comment>
<keyword id="KW-0963">Cytoplasm</keyword>
<keyword id="KW-0238">DNA-binding</keyword>
<keyword id="KW-0804">Transcription</keyword>
<keyword id="KW-0805">Transcription regulation</keyword>
<organism>
    <name type="scientific">Burkholderia ambifaria (strain MC40-6)</name>
    <dbReference type="NCBI Taxonomy" id="398577"/>
    <lineage>
        <taxon>Bacteria</taxon>
        <taxon>Pseudomonadati</taxon>
        <taxon>Pseudomonadota</taxon>
        <taxon>Betaproteobacteria</taxon>
        <taxon>Burkholderiales</taxon>
        <taxon>Burkholderiaceae</taxon>
        <taxon>Burkholderia</taxon>
        <taxon>Burkholderia cepacia complex</taxon>
    </lineage>
</organism>
<protein>
    <recommendedName>
        <fullName evidence="1">Probable transcriptional regulatory protein BamMC406_2210</fullName>
    </recommendedName>
</protein>
<gene>
    <name type="ordered locus">BamMC406_2210</name>
</gene>
<dbReference type="EMBL" id="CP001025">
    <property type="protein sequence ID" value="ACB64689.1"/>
    <property type="molecule type" value="Genomic_DNA"/>
</dbReference>
<dbReference type="RefSeq" id="WP_006752214.1">
    <property type="nucleotide sequence ID" value="NC_010551.1"/>
</dbReference>
<dbReference type="SMR" id="B1YU49"/>
<dbReference type="KEGG" id="bac:BamMC406_2210"/>
<dbReference type="HOGENOM" id="CLU_062974_2_2_4"/>
<dbReference type="OrthoDB" id="9781053at2"/>
<dbReference type="Proteomes" id="UP000001680">
    <property type="component" value="Chromosome 1"/>
</dbReference>
<dbReference type="GO" id="GO:0005829">
    <property type="term" value="C:cytosol"/>
    <property type="evidence" value="ECO:0007669"/>
    <property type="project" value="TreeGrafter"/>
</dbReference>
<dbReference type="GO" id="GO:0003677">
    <property type="term" value="F:DNA binding"/>
    <property type="evidence" value="ECO:0007669"/>
    <property type="project" value="UniProtKB-UniRule"/>
</dbReference>
<dbReference type="GO" id="GO:0006355">
    <property type="term" value="P:regulation of DNA-templated transcription"/>
    <property type="evidence" value="ECO:0007669"/>
    <property type="project" value="UniProtKB-UniRule"/>
</dbReference>
<dbReference type="FunFam" id="1.10.10.200:FF:000001">
    <property type="entry name" value="Probable transcriptional regulatory protein YebC"/>
    <property type="match status" value="1"/>
</dbReference>
<dbReference type="FunFam" id="3.30.70.980:FF:000002">
    <property type="entry name" value="Probable transcriptional regulatory protein YebC"/>
    <property type="match status" value="1"/>
</dbReference>
<dbReference type="Gene3D" id="1.10.10.200">
    <property type="match status" value="1"/>
</dbReference>
<dbReference type="Gene3D" id="3.30.70.980">
    <property type="match status" value="2"/>
</dbReference>
<dbReference type="HAMAP" id="MF_00693">
    <property type="entry name" value="Transcrip_reg_TACO1"/>
    <property type="match status" value="1"/>
</dbReference>
<dbReference type="InterPro" id="IPR017856">
    <property type="entry name" value="Integrase-like_N"/>
</dbReference>
<dbReference type="InterPro" id="IPR048300">
    <property type="entry name" value="TACO1_YebC-like_2nd/3rd_dom"/>
</dbReference>
<dbReference type="InterPro" id="IPR049083">
    <property type="entry name" value="TACO1_YebC_N"/>
</dbReference>
<dbReference type="InterPro" id="IPR002876">
    <property type="entry name" value="Transcrip_reg_TACO1-like"/>
</dbReference>
<dbReference type="InterPro" id="IPR026564">
    <property type="entry name" value="Transcrip_reg_TACO1-like_dom3"/>
</dbReference>
<dbReference type="InterPro" id="IPR029072">
    <property type="entry name" value="YebC-like"/>
</dbReference>
<dbReference type="NCBIfam" id="NF001030">
    <property type="entry name" value="PRK00110.1"/>
    <property type="match status" value="1"/>
</dbReference>
<dbReference type="NCBIfam" id="NF009044">
    <property type="entry name" value="PRK12378.1"/>
    <property type="match status" value="1"/>
</dbReference>
<dbReference type="NCBIfam" id="TIGR01033">
    <property type="entry name" value="YebC/PmpR family DNA-binding transcriptional regulator"/>
    <property type="match status" value="1"/>
</dbReference>
<dbReference type="PANTHER" id="PTHR12532:SF6">
    <property type="entry name" value="TRANSCRIPTIONAL REGULATORY PROTEIN YEBC-RELATED"/>
    <property type="match status" value="1"/>
</dbReference>
<dbReference type="PANTHER" id="PTHR12532">
    <property type="entry name" value="TRANSLATIONAL ACTIVATOR OF CYTOCHROME C OXIDASE 1"/>
    <property type="match status" value="1"/>
</dbReference>
<dbReference type="Pfam" id="PF20772">
    <property type="entry name" value="TACO1_YebC_N"/>
    <property type="match status" value="1"/>
</dbReference>
<dbReference type="Pfam" id="PF01709">
    <property type="entry name" value="Transcrip_reg"/>
    <property type="match status" value="1"/>
</dbReference>
<dbReference type="SUPFAM" id="SSF75625">
    <property type="entry name" value="YebC-like"/>
    <property type="match status" value="1"/>
</dbReference>
<reference key="1">
    <citation type="submission" date="2008-04" db="EMBL/GenBank/DDBJ databases">
        <title>Complete sequence of chromosome 1 of Burkholderia ambifaria MC40-6.</title>
        <authorList>
            <person name="Copeland A."/>
            <person name="Lucas S."/>
            <person name="Lapidus A."/>
            <person name="Glavina del Rio T."/>
            <person name="Dalin E."/>
            <person name="Tice H."/>
            <person name="Pitluck S."/>
            <person name="Chain P."/>
            <person name="Malfatti S."/>
            <person name="Shin M."/>
            <person name="Vergez L."/>
            <person name="Lang D."/>
            <person name="Schmutz J."/>
            <person name="Larimer F."/>
            <person name="Land M."/>
            <person name="Hauser L."/>
            <person name="Kyrpides N."/>
            <person name="Lykidis A."/>
            <person name="Ramette A."/>
            <person name="Konstantinidis K."/>
            <person name="Tiedje J."/>
            <person name="Richardson P."/>
        </authorList>
    </citation>
    <scope>NUCLEOTIDE SEQUENCE [LARGE SCALE GENOMIC DNA]</scope>
    <source>
        <strain>MC40-6</strain>
    </source>
</reference>